<accession>Q4UKR7</accession>
<name>HSPC1_RICFE</name>
<protein>
    <recommendedName>
        <fullName>Small heat shock protein C1</fullName>
    </recommendedName>
</protein>
<reference key="1">
    <citation type="journal article" date="2005" name="PLoS Biol.">
        <title>The genome sequence of Rickettsia felis identifies the first putative conjugative plasmid in an obligate intracellular parasite.</title>
        <authorList>
            <person name="Ogata H."/>
            <person name="Renesto P."/>
            <person name="Audic S."/>
            <person name="Robert C."/>
            <person name="Blanc G."/>
            <person name="Fournier P.-E."/>
            <person name="Parinello H."/>
            <person name="Claverie J.-M."/>
            <person name="Raoult D."/>
        </authorList>
    </citation>
    <scope>NUCLEOTIDE SEQUENCE [LARGE SCALE GENOMIC DNA]</scope>
    <source>
        <strain>ATCC VR-1525 / URRWXCal2</strain>
    </source>
</reference>
<comment type="similarity">
    <text evidence="1">Belongs to the small heat shock protein (HSP20) family.</text>
</comment>
<comment type="sequence caution" evidence="2">
    <conflict type="frameshift">
        <sequence resource="EMBL-CDS" id="AAY61856"/>
    </conflict>
</comment>
<feature type="chain" id="PRO_0000288739" description="Small heat shock protein C1">
    <location>
        <begin position="1"/>
        <end position="167"/>
    </location>
</feature>
<feature type="domain" description="sHSP" evidence="1">
    <location>
        <begin position="59"/>
        <end position="167"/>
    </location>
</feature>
<dbReference type="EMBL" id="CP000053">
    <property type="protein sequence ID" value="AAY61856.1"/>
    <property type="status" value="ALT_FRAME"/>
    <property type="molecule type" value="Genomic_DNA"/>
</dbReference>
<dbReference type="STRING" id="315456.RF_1005"/>
<dbReference type="KEGG" id="rfe:RF_1005"/>
<dbReference type="eggNOG" id="COG0071">
    <property type="taxonomic scope" value="Bacteria"/>
</dbReference>
<dbReference type="HOGENOM" id="CLU_135634_0_0_5"/>
<dbReference type="Proteomes" id="UP000008548">
    <property type="component" value="Chromosome"/>
</dbReference>
<dbReference type="CDD" id="cd06464">
    <property type="entry name" value="ACD_sHsps-like"/>
    <property type="match status" value="1"/>
</dbReference>
<dbReference type="Gene3D" id="2.60.40.790">
    <property type="match status" value="1"/>
</dbReference>
<dbReference type="InterPro" id="IPR002068">
    <property type="entry name" value="A-crystallin/Hsp20_dom"/>
</dbReference>
<dbReference type="InterPro" id="IPR008978">
    <property type="entry name" value="HSP20-like_chaperone"/>
</dbReference>
<dbReference type="Pfam" id="PF00011">
    <property type="entry name" value="HSP20"/>
    <property type="match status" value="1"/>
</dbReference>
<dbReference type="SUPFAM" id="SSF49764">
    <property type="entry name" value="HSP20-like chaperones"/>
    <property type="match status" value="1"/>
</dbReference>
<dbReference type="PROSITE" id="PS01031">
    <property type="entry name" value="SHSP"/>
    <property type="match status" value="1"/>
</dbReference>
<gene>
    <name type="primary">hspC1</name>
    <name type="ordered locus">RF_1005</name>
</gene>
<evidence type="ECO:0000255" key="1">
    <source>
        <dbReference type="PROSITE-ProRule" id="PRU00285"/>
    </source>
</evidence>
<evidence type="ECO:0000305" key="2"/>
<proteinExistence type="inferred from homology"/>
<keyword id="KW-0346">Stress response</keyword>
<organism>
    <name type="scientific">Rickettsia felis (strain ATCC VR-1525 / URRWXCal2)</name>
    <name type="common">Rickettsia azadi</name>
    <dbReference type="NCBI Taxonomy" id="315456"/>
    <lineage>
        <taxon>Bacteria</taxon>
        <taxon>Pseudomonadati</taxon>
        <taxon>Pseudomonadota</taxon>
        <taxon>Alphaproteobacteria</taxon>
        <taxon>Rickettsiales</taxon>
        <taxon>Rickettsiaceae</taxon>
        <taxon>Rickettsieae</taxon>
        <taxon>Rickettsia</taxon>
        <taxon>spotted fever group</taxon>
    </lineage>
</organism>
<sequence length="167" mass="19011">MLKSAKLYIPSIAAIILSSNIAMAXNNYDTGHATPLRQVADLIDNQITNIDNLFKNRLPLYESNSIKSNFITKDKQYIIIMEVPGFDKSQIKIKVNGNKLFITRNIEEKNKADDSDNYMNKNFNYVISLYEDVDQANISSSLKNGILTIILPRIEIKEQDAREITIN</sequence>